<dbReference type="EC" id="4.1.1.23"/>
<dbReference type="EMBL" id="K02206">
    <property type="protein sequence ID" value="AAA34824.1"/>
    <property type="molecule type" value="Genomic_DNA"/>
</dbReference>
<dbReference type="EMBL" id="K02207">
    <property type="protein sequence ID" value="AAA34825.1"/>
    <property type="molecule type" value="Genomic_DNA"/>
</dbReference>
<dbReference type="EMBL" id="U18530">
    <property type="protein sequence ID" value="AAB64498.1"/>
    <property type="molecule type" value="Genomic_DNA"/>
</dbReference>
<dbReference type="EMBL" id="U89671">
    <property type="protein sequence ID" value="AAB49978.1"/>
    <property type="molecule type" value="Genomic_DNA"/>
</dbReference>
<dbReference type="EMBL" id="M12926">
    <property type="protein sequence ID" value="AAA35199.1"/>
    <property type="molecule type" value="Genomic_DNA"/>
</dbReference>
<dbReference type="EMBL" id="X00191">
    <property type="protein sequence ID" value="CAA25010.1"/>
    <property type="status" value="ALT_INIT"/>
    <property type="molecule type" value="Genomic_DNA"/>
</dbReference>
<dbReference type="EMBL" id="U89927">
    <property type="protein sequence ID" value="AAB64383.1"/>
    <property type="molecule type" value="Genomic_DNA"/>
</dbReference>
<dbReference type="EMBL" id="U63018">
    <property type="protein sequence ID" value="AAC53678.1"/>
    <property type="molecule type" value="Genomic_DNA"/>
</dbReference>
<dbReference type="EMBL" id="BK006939">
    <property type="protein sequence ID" value="DAA07631.1"/>
    <property type="molecule type" value="Genomic_DNA"/>
</dbReference>
<dbReference type="PIR" id="A01082">
    <property type="entry name" value="DEBYOP"/>
</dbReference>
<dbReference type="PIR" id="S05735">
    <property type="entry name" value="DCBYOF"/>
</dbReference>
<dbReference type="RefSeq" id="NP_010893.3">
    <property type="nucleotide sequence ID" value="NM_001178836.3"/>
</dbReference>
<dbReference type="PDB" id="1DQW">
    <property type="method" value="X-ray"/>
    <property type="resolution" value="2.10 A"/>
    <property type="chains" value="A/B/C/D=1-267"/>
</dbReference>
<dbReference type="PDB" id="1DQX">
    <property type="method" value="X-ray"/>
    <property type="resolution" value="2.40 A"/>
    <property type="chains" value="A/B/C/D=1-267"/>
</dbReference>
<dbReference type="PDB" id="3GDK">
    <property type="method" value="X-ray"/>
    <property type="resolution" value="2.00 A"/>
    <property type="chains" value="A/B/C/D=1-267"/>
</dbReference>
<dbReference type="PDB" id="3GDL">
    <property type="method" value="X-ray"/>
    <property type="resolution" value="1.65 A"/>
    <property type="chains" value="A/B=1-267"/>
</dbReference>
<dbReference type="PDB" id="3GDM">
    <property type="method" value="X-ray"/>
    <property type="resolution" value="1.60 A"/>
    <property type="chains" value="A/B=1-267"/>
</dbReference>
<dbReference type="PDB" id="3GDR">
    <property type="method" value="X-ray"/>
    <property type="resolution" value="1.90 A"/>
    <property type="chains" value="A/B/C/D=1-267"/>
</dbReference>
<dbReference type="PDB" id="3GDT">
    <property type="method" value="X-ray"/>
    <property type="resolution" value="1.60 A"/>
    <property type="chains" value="A/B/C/D=1-267"/>
</dbReference>
<dbReference type="PDBsum" id="1DQW"/>
<dbReference type="PDBsum" id="1DQX"/>
<dbReference type="PDBsum" id="3GDK"/>
<dbReference type="PDBsum" id="3GDL"/>
<dbReference type="PDBsum" id="3GDM"/>
<dbReference type="PDBsum" id="3GDR"/>
<dbReference type="PDBsum" id="3GDT"/>
<dbReference type="SMR" id="P03962"/>
<dbReference type="BioGRID" id="36708">
    <property type="interactions" value="27"/>
</dbReference>
<dbReference type="DIP" id="DIP-6576N"/>
<dbReference type="FunCoup" id="P03962">
    <property type="interactions" value="1409"/>
</dbReference>
<dbReference type="IntAct" id="P03962">
    <property type="interactions" value="3"/>
</dbReference>
<dbReference type="MINT" id="P03962"/>
<dbReference type="STRING" id="4932.YEL021W"/>
<dbReference type="BindingDB" id="P03962"/>
<dbReference type="ChEMBL" id="CHEMBL4858"/>
<dbReference type="DrugCentral" id="P03962"/>
<dbReference type="iPTMnet" id="P03962"/>
<dbReference type="PaxDb" id="4932-YEL021W"/>
<dbReference type="PeptideAtlas" id="P03962"/>
<dbReference type="EnsemblFungi" id="YEL021W_mRNA">
    <property type="protein sequence ID" value="YEL021W"/>
    <property type="gene ID" value="YEL021W"/>
</dbReference>
<dbReference type="GeneID" id="856692"/>
<dbReference type="KEGG" id="sce:YEL021W"/>
<dbReference type="AGR" id="SGD:S000000747"/>
<dbReference type="SGD" id="S000000747">
    <property type="gene designation" value="URA3"/>
</dbReference>
<dbReference type="VEuPathDB" id="FungiDB:YEL021W"/>
<dbReference type="eggNOG" id="KOG1377">
    <property type="taxonomic scope" value="Eukaryota"/>
</dbReference>
<dbReference type="GeneTree" id="ENSGT00390000001856"/>
<dbReference type="HOGENOM" id="CLU_030821_0_0_1"/>
<dbReference type="InParanoid" id="P03962"/>
<dbReference type="OMA" id="CLIKTHI"/>
<dbReference type="OrthoDB" id="10263753at2759"/>
<dbReference type="BioCyc" id="MetaCyc:YEL021W-MONOMER"/>
<dbReference type="BioCyc" id="YEAST:YEL021W-MONOMER"/>
<dbReference type="BRENDA" id="4.1.1.23">
    <property type="organism ID" value="984"/>
</dbReference>
<dbReference type="SABIO-RK" id="P03962"/>
<dbReference type="UniPathway" id="UPA00070">
    <property type="reaction ID" value="UER00120"/>
</dbReference>
<dbReference type="BioGRID-ORCS" id="856692">
    <property type="hits" value="1 hit in 10 CRISPR screens"/>
</dbReference>
<dbReference type="CD-CODE" id="E03F929F">
    <property type="entry name" value="Stress granule"/>
</dbReference>
<dbReference type="EvolutionaryTrace" id="P03962"/>
<dbReference type="PHI-base" id="PHI:506"/>
<dbReference type="PRO" id="PR:P03962"/>
<dbReference type="Proteomes" id="UP000002311">
    <property type="component" value="Chromosome V"/>
</dbReference>
<dbReference type="RNAct" id="P03962">
    <property type="molecule type" value="protein"/>
</dbReference>
<dbReference type="GO" id="GO:0005829">
    <property type="term" value="C:cytosol"/>
    <property type="evidence" value="ECO:0000314"/>
    <property type="project" value="SGD"/>
</dbReference>
<dbReference type="GO" id="GO:0004590">
    <property type="term" value="F:orotidine-5'-phosphate decarboxylase activity"/>
    <property type="evidence" value="ECO:0000314"/>
    <property type="project" value="SGD"/>
</dbReference>
<dbReference type="GO" id="GO:0006207">
    <property type="term" value="P:'de novo' pyrimidine nucleobase biosynthetic process"/>
    <property type="evidence" value="ECO:0000315"/>
    <property type="project" value="SGD"/>
</dbReference>
<dbReference type="GO" id="GO:0044205">
    <property type="term" value="P:'de novo' UMP biosynthetic process"/>
    <property type="evidence" value="ECO:0007669"/>
    <property type="project" value="UniProtKB-UniPathway"/>
</dbReference>
<dbReference type="GO" id="GO:0006222">
    <property type="term" value="P:UMP biosynthetic process"/>
    <property type="evidence" value="ECO:0000314"/>
    <property type="project" value="SGD"/>
</dbReference>
<dbReference type="CDD" id="cd04725">
    <property type="entry name" value="OMP_decarboxylase_like"/>
    <property type="match status" value="1"/>
</dbReference>
<dbReference type="FunFam" id="3.20.20.70:FF:000114">
    <property type="entry name" value="Decarboxylase,orotidine phosphate"/>
    <property type="match status" value="1"/>
</dbReference>
<dbReference type="Gene3D" id="3.20.20.70">
    <property type="entry name" value="Aldolase class I"/>
    <property type="match status" value="1"/>
</dbReference>
<dbReference type="InterPro" id="IPR013785">
    <property type="entry name" value="Aldolase_TIM"/>
</dbReference>
<dbReference type="InterPro" id="IPR014732">
    <property type="entry name" value="OMPdecase"/>
</dbReference>
<dbReference type="InterPro" id="IPR018089">
    <property type="entry name" value="OMPdecase_AS"/>
</dbReference>
<dbReference type="InterPro" id="IPR001754">
    <property type="entry name" value="OMPdeCOase_dom"/>
</dbReference>
<dbReference type="InterPro" id="IPR011060">
    <property type="entry name" value="RibuloseP-bd_barrel"/>
</dbReference>
<dbReference type="NCBIfam" id="TIGR01740">
    <property type="entry name" value="pyrF"/>
    <property type="match status" value="1"/>
</dbReference>
<dbReference type="PANTHER" id="PTHR32119">
    <property type="entry name" value="OROTIDINE 5'-PHOSPHATE DECARBOXYLASE"/>
    <property type="match status" value="1"/>
</dbReference>
<dbReference type="PANTHER" id="PTHR32119:SF2">
    <property type="entry name" value="OROTIDINE 5'-PHOSPHATE DECARBOXYLASE"/>
    <property type="match status" value="1"/>
</dbReference>
<dbReference type="Pfam" id="PF00215">
    <property type="entry name" value="OMPdecase"/>
    <property type="match status" value="1"/>
</dbReference>
<dbReference type="SMART" id="SM00934">
    <property type="entry name" value="OMPdecase"/>
    <property type="match status" value="1"/>
</dbReference>
<dbReference type="SUPFAM" id="SSF51366">
    <property type="entry name" value="Ribulose-phoshate binding barrel"/>
    <property type="match status" value="1"/>
</dbReference>
<dbReference type="PROSITE" id="PS00156">
    <property type="entry name" value="OMPDECASE"/>
    <property type="match status" value="1"/>
</dbReference>
<name>PYRF_YEAST</name>
<protein>
    <recommendedName>
        <fullName>Orotidine 5'-phosphate decarboxylase</fullName>
        <ecNumber>4.1.1.23</ecNumber>
    </recommendedName>
    <alternativeName>
        <fullName>OMP decarboxylase</fullName>
        <shortName>OMPDCase</shortName>
        <shortName>OMPdecase</shortName>
    </alternativeName>
    <alternativeName>
        <fullName>Uridine 5'-monophosphate synthase</fullName>
        <shortName>UMP synthase</shortName>
    </alternativeName>
</protein>
<organism>
    <name type="scientific">Saccharomyces cerevisiae (strain ATCC 204508 / S288c)</name>
    <name type="common">Baker's yeast</name>
    <dbReference type="NCBI Taxonomy" id="559292"/>
    <lineage>
        <taxon>Eukaryota</taxon>
        <taxon>Fungi</taxon>
        <taxon>Dikarya</taxon>
        <taxon>Ascomycota</taxon>
        <taxon>Saccharomycotina</taxon>
        <taxon>Saccharomycetes</taxon>
        <taxon>Saccharomycetales</taxon>
        <taxon>Saccharomycetaceae</taxon>
        <taxon>Saccharomyces</taxon>
    </lineage>
</organism>
<reference key="1">
    <citation type="journal article" date="1984" name="Gene">
        <title>Structure and function of the yeast URA3 gene: expression in Escherichia coli.</title>
        <authorList>
            <person name="Rose M."/>
            <person name="Grisafi P."/>
            <person name="Botstein D."/>
        </authorList>
    </citation>
    <scope>NUCLEOTIDE SEQUENCE [GENOMIC DNA]</scope>
    <source>
        <strain>+D4</strain>
        <strain>ATCC 28383 / FL100 / VTT C-80102</strain>
    </source>
</reference>
<reference key="2">
    <citation type="journal article" date="1997" name="Nature">
        <title>The nucleotide sequence of Saccharomyces cerevisiae chromosome V.</title>
        <authorList>
            <person name="Dietrich F.S."/>
            <person name="Mulligan J.T."/>
            <person name="Hennessy K.M."/>
            <person name="Yelton M.A."/>
            <person name="Allen E."/>
            <person name="Araujo R."/>
            <person name="Aviles E."/>
            <person name="Berno A."/>
            <person name="Brennan T."/>
            <person name="Carpenter J."/>
            <person name="Chen E."/>
            <person name="Cherry J.M."/>
            <person name="Chung E."/>
            <person name="Duncan M."/>
            <person name="Guzman E."/>
            <person name="Hartzell G."/>
            <person name="Hunicke-Smith S."/>
            <person name="Hyman R.W."/>
            <person name="Kayser A."/>
            <person name="Komp C."/>
            <person name="Lashkari D."/>
            <person name="Lew H."/>
            <person name="Lin D."/>
            <person name="Mosedale D."/>
            <person name="Nakahara K."/>
            <person name="Namath A."/>
            <person name="Norgren R."/>
            <person name="Oefner P."/>
            <person name="Oh C."/>
            <person name="Petel F.X."/>
            <person name="Roberts D."/>
            <person name="Sehl P."/>
            <person name="Schramm S."/>
            <person name="Shogren T."/>
            <person name="Smith V."/>
            <person name="Taylor P."/>
            <person name="Wei Y."/>
            <person name="Botstein D."/>
            <person name="Davis R.W."/>
        </authorList>
    </citation>
    <scope>NUCLEOTIDE SEQUENCE [LARGE SCALE GENOMIC DNA]</scope>
    <source>
        <strain>ATCC 204508 / S288c</strain>
    </source>
</reference>
<reference key="3">
    <citation type="journal article" date="2014" name="G3 (Bethesda)">
        <title>The reference genome sequence of Saccharomyces cerevisiae: Then and now.</title>
        <authorList>
            <person name="Engel S.R."/>
            <person name="Dietrich F.S."/>
            <person name="Fisk D.G."/>
            <person name="Binkley G."/>
            <person name="Balakrishnan R."/>
            <person name="Costanzo M.C."/>
            <person name="Dwight S.S."/>
            <person name="Hitz B.C."/>
            <person name="Karra K."/>
            <person name="Nash R.S."/>
            <person name="Weng S."/>
            <person name="Wong E.D."/>
            <person name="Lloyd P."/>
            <person name="Skrzypek M.S."/>
            <person name="Miyasato S.R."/>
            <person name="Simison M."/>
            <person name="Cherry J.M."/>
        </authorList>
    </citation>
    <scope>GENOME REANNOTATION</scope>
    <source>
        <strain>ATCC 204508 / S288c</strain>
    </source>
</reference>
<reference key="4">
    <citation type="submission" date="1997-06" db="EMBL/GenBank/DDBJ databases">
        <authorList>
            <person name="Holtz A."/>
            <person name="Lou Y."/>
        </authorList>
    </citation>
    <scope>NUCLEOTIDE SEQUENCE [GENOMIC DNA]</scope>
</reference>
<reference key="5">
    <citation type="journal article" date="1986" name="Mol. Cell. Biol.">
        <title>Transcription terminator-like element within a Saccharomyces cerevisiae promoter region.</title>
        <authorList>
            <person name="Yarger J.G."/>
            <person name="Armilei G."/>
            <person name="Gorman M.C."/>
        </authorList>
    </citation>
    <scope>NUCLEOTIDE SEQUENCE [GENOMIC DNA] OF 1-73</scope>
</reference>
<reference key="6">
    <citation type="journal article" date="1983" name="J. Mol. Biol.">
        <title>Structure and function of the yeast URA3 gene. Differentially regulated expression of hybrid beta-galactosidase from overlapping coding sequences in yeast.</title>
        <authorList>
            <person name="Rose M."/>
            <person name="Botstein D."/>
        </authorList>
    </citation>
    <scope>NUCLEOTIDE SEQUENCE [GENOMIC DNA] OF 1-11</scope>
</reference>
<reference key="7">
    <citation type="journal article" date="2001" name="J. Biol. Chem.">
        <title>Dissecting a charged network at the active site of orotidine-5'-phosphate decarboxylase.</title>
        <authorList>
            <person name="Miller B.G."/>
            <person name="Snider M.J."/>
            <person name="Wolfenden R."/>
            <person name="Short S.A."/>
        </authorList>
    </citation>
    <scope>MUTAGENESIS OF LYS-59; ASP-91; LYS-93; ASP-96 AND GLN-215</scope>
</reference>
<reference key="8">
    <citation type="journal article" date="2003" name="Nat. Biotechnol.">
        <title>A proteomics approach to understanding protein ubiquitination.</title>
        <authorList>
            <person name="Peng J."/>
            <person name="Schwartz D."/>
            <person name="Elias J.E."/>
            <person name="Thoreen C.C."/>
            <person name="Cheng D."/>
            <person name="Marsischky G."/>
            <person name="Roelofs J."/>
            <person name="Finley D."/>
            <person name="Gygi S.P."/>
        </authorList>
    </citation>
    <scope>UBIQUITINATION [LARGE SCALE ANALYSIS] AT LYS-93; LYS-209 AND LYS-253</scope>
    <scope>IDENTIFICATION BY MASS SPECTROMETRY</scope>
    <source>
        <strain>SUB592</strain>
    </source>
</reference>
<reference key="9">
    <citation type="journal article" date="2012" name="Proc. Natl. Acad. Sci. U.S.A.">
        <title>N-terminal acetylome analyses and functional insights of the N-terminal acetyltransferase NatB.</title>
        <authorList>
            <person name="Van Damme P."/>
            <person name="Lasa M."/>
            <person name="Polevoda B."/>
            <person name="Gazquez C."/>
            <person name="Elosegui-Artola A."/>
            <person name="Kim D.S."/>
            <person name="De Juan-Pardo E."/>
            <person name="Demeyer K."/>
            <person name="Hole K."/>
            <person name="Larrea E."/>
            <person name="Timmerman E."/>
            <person name="Prieto J."/>
            <person name="Arnesen T."/>
            <person name="Sherman F."/>
            <person name="Gevaert K."/>
            <person name="Aldabe R."/>
        </authorList>
    </citation>
    <scope>ACETYLATION [LARGE SCALE ANALYSIS] AT SER-2</scope>
    <scope>CLEAVAGE OF INITIATOR METHIONINE [LARGE SCALE ANALYSIS]</scope>
    <scope>IDENTIFICATION BY MASS SPECTROMETRY [LARGE SCALE ANALYSIS]</scope>
</reference>
<reference key="10">
    <citation type="journal article" date="2000" name="Proc. Natl. Acad. Sci. U.S.A.">
        <title>Anatomy of a proficient enzyme: the structure of orotidine 5'-monophosphate decarboxylase in the presence and absence of a potential transition state analog.</title>
        <authorList>
            <person name="Miller B.G."/>
            <person name="Hassell A.M."/>
            <person name="Wolfenden R."/>
            <person name="Milburn M.V."/>
            <person name="Short S.A."/>
        </authorList>
    </citation>
    <scope>X-RAY CRYSTALLOGRAPHY (2.1 ANGSTROMS) OF APOENZYME AND IN COMPLEX WITH TRANSITION STATE ANALOG</scope>
</reference>
<gene>
    <name type="primary">URA3</name>
    <name type="ordered locus">YEL021W</name>
</gene>
<sequence>MSKATYKERAATHPSPVAAKLFNIMHEKQTNLCASLDVRTTKELLELVEALGPKICLLKTHVDILTDFSMEGTVKPLKALSAKYNFLLFEDRKFADIGNTVKLQYSAGVYRIAEWADITNAHGVVGPGIVSGLKQAAEEVTKEPRGLLMLAELSCKGSLATGEYTKGTVDIAKSDKDFVIGFIAQRDMGGRDEGYDWLIMTPGVGLDDKGDALGQQYRTVDDVVSTGSDIIIVGRGLFAKGRDAKVEGERYRKAGWEAYLRRCGQQN</sequence>
<keyword id="KW-0002">3D-structure</keyword>
<keyword id="KW-0007">Acetylation</keyword>
<keyword id="KW-0210">Decarboxylase</keyword>
<keyword id="KW-1017">Isopeptide bond</keyword>
<keyword id="KW-0456">Lyase</keyword>
<keyword id="KW-0665">Pyrimidine biosynthesis</keyword>
<keyword id="KW-1185">Reference proteome</keyword>
<keyword id="KW-0832">Ubl conjugation</keyword>
<comment type="catalytic activity">
    <reaction evidence="1">
        <text>orotidine 5'-phosphate + H(+) = UMP + CO2</text>
        <dbReference type="Rhea" id="RHEA:11596"/>
        <dbReference type="ChEBI" id="CHEBI:15378"/>
        <dbReference type="ChEBI" id="CHEBI:16526"/>
        <dbReference type="ChEBI" id="CHEBI:57538"/>
        <dbReference type="ChEBI" id="CHEBI:57865"/>
        <dbReference type="EC" id="4.1.1.23"/>
    </reaction>
</comment>
<comment type="pathway">
    <text>Pyrimidine metabolism; UMP biosynthesis via de novo pathway; UMP from orotate: step 2/2.</text>
</comment>
<comment type="similarity">
    <text evidence="4">Belongs to the OMP decarboxylase family.</text>
</comment>
<comment type="sequence caution" evidence="4">
    <conflict type="erroneous initiation">
        <sequence resource="EMBL-CDS" id="CAA25010"/>
    </conflict>
</comment>
<feature type="initiator methionine" description="Removed" evidence="5">
    <location>
        <position position="1"/>
    </location>
</feature>
<feature type="chain" id="PRO_0000134692" description="Orotidine 5'-phosphate decarboxylase">
    <location>
        <begin position="2"/>
        <end position="267"/>
    </location>
</feature>
<feature type="active site" description="Proton donor">
    <location>
        <position position="93"/>
    </location>
</feature>
<feature type="binding site">
    <location>
        <position position="37"/>
    </location>
    <ligand>
        <name>substrate</name>
    </ligand>
</feature>
<feature type="binding site">
    <location>
        <begin position="59"/>
        <end position="61"/>
    </location>
    <ligand>
        <name>substrate</name>
    </ligand>
</feature>
<feature type="binding site">
    <location>
        <begin position="91"/>
        <end position="100"/>
    </location>
    <ligand>
        <name>substrate</name>
    </ligand>
</feature>
<feature type="binding site">
    <location>
        <position position="217"/>
    </location>
    <ligand>
        <name>substrate</name>
    </ligand>
</feature>
<feature type="binding site">
    <location>
        <position position="235"/>
    </location>
    <ligand>
        <name>substrate</name>
    </ligand>
</feature>
<feature type="modified residue" description="N-acetylserine" evidence="5">
    <location>
        <position position="2"/>
    </location>
</feature>
<feature type="cross-link" description="Glycyl lysine isopeptide (Lys-Gly) (interchain with G-Cter in ubiquitin)" evidence="3">
    <location>
        <position position="93"/>
    </location>
</feature>
<feature type="cross-link" description="Glycyl lysine isopeptide (Lys-Gly) (interchain with G-Cter in ubiquitin)" evidence="3">
    <location>
        <position position="209"/>
    </location>
</feature>
<feature type="cross-link" description="Glycyl lysine isopeptide (Lys-Gly) (interchain with G-Cter in ubiquitin)" evidence="3">
    <location>
        <position position="253"/>
    </location>
</feature>
<feature type="sequence variant" description="In strain: +D4.">
    <original>A</original>
    <variation>S</variation>
    <location>
        <position position="160"/>
    </location>
</feature>
<feature type="mutagenesis site" description="Reduces kcat 100-fold. Reduces substrate affinity 900-fold." evidence="2">
    <original>K</original>
    <variation>A</variation>
    <location>
        <position position="59"/>
    </location>
</feature>
<feature type="mutagenesis site" description="Reduces activity over 100000-fold." evidence="2">
    <original>D</original>
    <variation>A</variation>
    <location>
        <position position="91"/>
    </location>
</feature>
<feature type="mutagenesis site" description="Reduces activity over 100000-fold." evidence="2">
    <original>K</original>
    <variation>A</variation>
    <location>
        <position position="93"/>
    </location>
</feature>
<feature type="mutagenesis site" description="Reduces kcat over 100000-fold. Reduces substrate affinity 11-fold." evidence="2">
    <original>D</original>
    <variation>A</variation>
    <location>
        <position position="96"/>
    </location>
</feature>
<feature type="mutagenesis site" description="No effect." evidence="2">
    <original>Q</original>
    <variation>A</variation>
    <location>
        <position position="215"/>
    </location>
</feature>
<feature type="sequence conflict" description="In Ref. 4; AAA35199." evidence="4" ref="4">
    <original>EGT</original>
    <variation>RIR</variation>
    <location>
        <begin position="71"/>
        <end position="73"/>
    </location>
</feature>
<feature type="helix" evidence="7">
    <location>
        <begin position="6"/>
        <end position="12"/>
    </location>
</feature>
<feature type="helix" evidence="7">
    <location>
        <begin position="16"/>
        <end position="28"/>
    </location>
</feature>
<feature type="strand" evidence="7">
    <location>
        <begin position="32"/>
        <end position="35"/>
    </location>
</feature>
<feature type="helix" evidence="7">
    <location>
        <begin position="41"/>
        <end position="51"/>
    </location>
</feature>
<feature type="helix" evidence="7">
    <location>
        <begin position="52"/>
        <end position="54"/>
    </location>
</feature>
<feature type="strand" evidence="7">
    <location>
        <begin position="56"/>
        <end position="60"/>
    </location>
</feature>
<feature type="helix" evidence="7">
    <location>
        <begin position="62"/>
        <end position="64"/>
    </location>
</feature>
<feature type="turn" evidence="7">
    <location>
        <begin position="70"/>
        <end position="73"/>
    </location>
</feature>
<feature type="helix" evidence="7">
    <location>
        <begin position="74"/>
        <end position="84"/>
    </location>
</feature>
<feature type="strand" evidence="7">
    <location>
        <begin position="87"/>
        <end position="94"/>
    </location>
</feature>
<feature type="helix" evidence="7">
    <location>
        <begin position="98"/>
        <end position="106"/>
    </location>
</feature>
<feature type="turn" evidence="7">
    <location>
        <begin position="108"/>
        <end position="110"/>
    </location>
</feature>
<feature type="helix" evidence="7">
    <location>
        <begin position="112"/>
        <end position="115"/>
    </location>
</feature>
<feature type="strand" evidence="7">
    <location>
        <begin position="117"/>
        <end position="122"/>
    </location>
</feature>
<feature type="helix" evidence="7">
    <location>
        <begin position="123"/>
        <end position="125"/>
    </location>
</feature>
<feature type="helix" evidence="7">
    <location>
        <begin position="128"/>
        <end position="140"/>
    </location>
</feature>
<feature type="strand" evidence="7">
    <location>
        <begin position="146"/>
        <end position="150"/>
    </location>
</feature>
<feature type="helix" evidence="7">
    <location>
        <begin position="162"/>
        <end position="172"/>
    </location>
</feature>
<feature type="turn" evidence="7">
    <location>
        <begin position="176"/>
        <end position="178"/>
    </location>
</feature>
<feature type="strand" evidence="7">
    <location>
        <begin position="179"/>
        <end position="183"/>
    </location>
</feature>
<feature type="helix" evidence="7">
    <location>
        <begin position="191"/>
        <end position="193"/>
    </location>
</feature>
<feature type="strand" evidence="7">
    <location>
        <begin position="198"/>
        <end position="201"/>
    </location>
</feature>
<feature type="strand" evidence="7">
    <location>
        <begin position="203"/>
        <end position="205"/>
    </location>
</feature>
<feature type="turn" evidence="6">
    <location>
        <begin position="208"/>
        <end position="210"/>
    </location>
</feature>
<feature type="helix" evidence="7">
    <location>
        <begin position="214"/>
        <end position="216"/>
    </location>
</feature>
<feature type="strand" evidence="7">
    <location>
        <begin position="217"/>
        <end position="219"/>
    </location>
</feature>
<feature type="helix" evidence="7">
    <location>
        <begin position="220"/>
        <end position="225"/>
    </location>
</feature>
<feature type="strand" evidence="7">
    <location>
        <begin position="229"/>
        <end position="233"/>
    </location>
</feature>
<feature type="helix" evidence="7">
    <location>
        <begin position="235"/>
        <end position="237"/>
    </location>
</feature>
<feature type="helix" evidence="7">
    <location>
        <begin position="244"/>
        <end position="262"/>
    </location>
</feature>
<accession>P03962</accession>
<accession>D3DLM7</accession>
<evidence type="ECO:0000255" key="1">
    <source>
        <dbReference type="PROSITE-ProRule" id="PRU10110"/>
    </source>
</evidence>
<evidence type="ECO:0000269" key="2">
    <source>
    </source>
</evidence>
<evidence type="ECO:0000269" key="3">
    <source>
    </source>
</evidence>
<evidence type="ECO:0000305" key="4"/>
<evidence type="ECO:0007744" key="5">
    <source>
    </source>
</evidence>
<evidence type="ECO:0007829" key="6">
    <source>
        <dbReference type="PDB" id="1DQW"/>
    </source>
</evidence>
<evidence type="ECO:0007829" key="7">
    <source>
        <dbReference type="PDB" id="3GDM"/>
    </source>
</evidence>
<proteinExistence type="evidence at protein level"/>